<organism>
    <name type="scientific">Streptococcus pneumoniae serotype 19F (strain G54)</name>
    <dbReference type="NCBI Taxonomy" id="512566"/>
    <lineage>
        <taxon>Bacteria</taxon>
        <taxon>Bacillati</taxon>
        <taxon>Bacillota</taxon>
        <taxon>Bacilli</taxon>
        <taxon>Lactobacillales</taxon>
        <taxon>Streptococcaceae</taxon>
        <taxon>Streptococcus</taxon>
    </lineage>
</organism>
<comment type="function">
    <text evidence="1">Endonuclease that specifically degrades the RNA of RNA-DNA hybrids.</text>
</comment>
<comment type="catalytic activity">
    <reaction evidence="1">
        <text>Endonucleolytic cleavage to 5'-phosphomonoester.</text>
        <dbReference type="EC" id="3.1.26.4"/>
    </reaction>
</comment>
<comment type="cofactor">
    <cofactor evidence="1">
        <name>Mn(2+)</name>
        <dbReference type="ChEBI" id="CHEBI:29035"/>
    </cofactor>
    <cofactor evidence="1">
        <name>Mg(2+)</name>
        <dbReference type="ChEBI" id="CHEBI:18420"/>
    </cofactor>
    <text evidence="1">Manganese or magnesium. Binds 1 divalent metal ion per monomer in the absence of substrate. May bind a second metal ion after substrate binding.</text>
</comment>
<comment type="subcellular location">
    <subcellularLocation>
        <location evidence="1">Cytoplasm</location>
    </subcellularLocation>
</comment>
<comment type="similarity">
    <text evidence="1">Belongs to the RNase HII family.</text>
</comment>
<accession>B5E4Q2</accession>
<dbReference type="EC" id="3.1.26.4" evidence="1"/>
<dbReference type="EMBL" id="CP001015">
    <property type="protein sequence ID" value="ACF55053.1"/>
    <property type="molecule type" value="Genomic_DNA"/>
</dbReference>
<dbReference type="SMR" id="B5E4Q2"/>
<dbReference type="KEGG" id="spx:SPG_1058"/>
<dbReference type="HOGENOM" id="CLU_036532_2_1_9"/>
<dbReference type="GO" id="GO:0005737">
    <property type="term" value="C:cytoplasm"/>
    <property type="evidence" value="ECO:0007669"/>
    <property type="project" value="UniProtKB-SubCell"/>
</dbReference>
<dbReference type="GO" id="GO:0032299">
    <property type="term" value="C:ribonuclease H2 complex"/>
    <property type="evidence" value="ECO:0007669"/>
    <property type="project" value="TreeGrafter"/>
</dbReference>
<dbReference type="GO" id="GO:0030145">
    <property type="term" value="F:manganese ion binding"/>
    <property type="evidence" value="ECO:0007669"/>
    <property type="project" value="UniProtKB-UniRule"/>
</dbReference>
<dbReference type="GO" id="GO:0003723">
    <property type="term" value="F:RNA binding"/>
    <property type="evidence" value="ECO:0007669"/>
    <property type="project" value="InterPro"/>
</dbReference>
<dbReference type="GO" id="GO:0004523">
    <property type="term" value="F:RNA-DNA hybrid ribonuclease activity"/>
    <property type="evidence" value="ECO:0007669"/>
    <property type="project" value="UniProtKB-UniRule"/>
</dbReference>
<dbReference type="GO" id="GO:0043137">
    <property type="term" value="P:DNA replication, removal of RNA primer"/>
    <property type="evidence" value="ECO:0007669"/>
    <property type="project" value="TreeGrafter"/>
</dbReference>
<dbReference type="GO" id="GO:0006298">
    <property type="term" value="P:mismatch repair"/>
    <property type="evidence" value="ECO:0007669"/>
    <property type="project" value="TreeGrafter"/>
</dbReference>
<dbReference type="CDD" id="cd07182">
    <property type="entry name" value="RNase_HII_bacteria_HII_like"/>
    <property type="match status" value="1"/>
</dbReference>
<dbReference type="FunFam" id="3.30.420.10:FF:000006">
    <property type="entry name" value="Ribonuclease HII"/>
    <property type="match status" value="1"/>
</dbReference>
<dbReference type="Gene3D" id="3.30.420.10">
    <property type="entry name" value="Ribonuclease H-like superfamily/Ribonuclease H"/>
    <property type="match status" value="1"/>
</dbReference>
<dbReference type="HAMAP" id="MF_00052_B">
    <property type="entry name" value="RNase_HII_B"/>
    <property type="match status" value="1"/>
</dbReference>
<dbReference type="InterPro" id="IPR022898">
    <property type="entry name" value="RNase_HII"/>
</dbReference>
<dbReference type="InterPro" id="IPR001352">
    <property type="entry name" value="RNase_HII/HIII"/>
</dbReference>
<dbReference type="InterPro" id="IPR024567">
    <property type="entry name" value="RNase_HII/HIII_dom"/>
</dbReference>
<dbReference type="InterPro" id="IPR012337">
    <property type="entry name" value="RNaseH-like_sf"/>
</dbReference>
<dbReference type="InterPro" id="IPR036397">
    <property type="entry name" value="RNaseH_sf"/>
</dbReference>
<dbReference type="NCBIfam" id="NF000594">
    <property type="entry name" value="PRK00015.1-1"/>
    <property type="match status" value="1"/>
</dbReference>
<dbReference type="NCBIfam" id="NF000595">
    <property type="entry name" value="PRK00015.1-3"/>
    <property type="match status" value="1"/>
</dbReference>
<dbReference type="PANTHER" id="PTHR10954">
    <property type="entry name" value="RIBONUCLEASE H2 SUBUNIT A"/>
    <property type="match status" value="1"/>
</dbReference>
<dbReference type="PANTHER" id="PTHR10954:SF18">
    <property type="entry name" value="RIBONUCLEASE HII"/>
    <property type="match status" value="1"/>
</dbReference>
<dbReference type="Pfam" id="PF01351">
    <property type="entry name" value="RNase_HII"/>
    <property type="match status" value="1"/>
</dbReference>
<dbReference type="SUPFAM" id="SSF53098">
    <property type="entry name" value="Ribonuclease H-like"/>
    <property type="match status" value="1"/>
</dbReference>
<dbReference type="PROSITE" id="PS51975">
    <property type="entry name" value="RNASE_H_2"/>
    <property type="match status" value="1"/>
</dbReference>
<sequence length="259" mass="28486">MATIKEIKELLVTVKELESPIFLELEKDNRSGVQKEISKRKRAIQAELDENLRLESMLSYEKELYKQGLTLIAGIDEVGRGPLAGPVVAAAVILPKNCKIKGLNDSKKIPKKKHLEIFQAVQDQALSIGIGIIDNQVIDQVNIYEATKLAMQEAISQLSPQPEHLLIDAMKLDLPISQTSIIKGDANSLSIAAASIVAKVTRDELMKEYDQQFPGYDFATNAGYGTAKHLEGLTKLGVTPIHRTSFEPVKSLVLGKKES</sequence>
<gene>
    <name evidence="1" type="primary">rnhB</name>
    <name type="ordered locus">SPG_1058</name>
</gene>
<reference key="1">
    <citation type="journal article" date="2001" name="Microb. Drug Resist.">
        <title>Annotated draft genomic sequence from a Streptococcus pneumoniae type 19F clinical isolate.</title>
        <authorList>
            <person name="Dopazo J."/>
            <person name="Mendoza A."/>
            <person name="Herrero J."/>
            <person name="Caldara F."/>
            <person name="Humbert Y."/>
            <person name="Friedli L."/>
            <person name="Guerrier M."/>
            <person name="Grand-Schenk E."/>
            <person name="Gandin C."/>
            <person name="de Francesco M."/>
            <person name="Polissi A."/>
            <person name="Buell G."/>
            <person name="Feger G."/>
            <person name="Garcia E."/>
            <person name="Peitsch M."/>
            <person name="Garcia-Bustos J.F."/>
        </authorList>
    </citation>
    <scope>NUCLEOTIDE SEQUENCE [LARGE SCALE GENOMIC DNA]</scope>
    <source>
        <strain>G54</strain>
    </source>
</reference>
<reference key="2">
    <citation type="submission" date="2008-03" db="EMBL/GenBank/DDBJ databases">
        <title>Pneumococcal beta glucoside metabolism investigated by whole genome comparison.</title>
        <authorList>
            <person name="Mulas L."/>
            <person name="Trappetti C."/>
            <person name="Hakenbeck R."/>
            <person name="Iannelli F."/>
            <person name="Pozzi G."/>
            <person name="Davidsen T.M."/>
            <person name="Tettelin H."/>
            <person name="Oggioni M."/>
        </authorList>
    </citation>
    <scope>NUCLEOTIDE SEQUENCE [LARGE SCALE GENOMIC DNA]</scope>
    <source>
        <strain>G54</strain>
    </source>
</reference>
<feature type="chain" id="PRO_1000091659" description="Ribonuclease HII">
    <location>
        <begin position="1"/>
        <end position="259"/>
    </location>
</feature>
<feature type="domain" description="RNase H type-2" evidence="2">
    <location>
        <begin position="70"/>
        <end position="258"/>
    </location>
</feature>
<feature type="binding site" evidence="1">
    <location>
        <position position="76"/>
    </location>
    <ligand>
        <name>a divalent metal cation</name>
        <dbReference type="ChEBI" id="CHEBI:60240"/>
    </ligand>
</feature>
<feature type="binding site" evidence="1">
    <location>
        <position position="77"/>
    </location>
    <ligand>
        <name>a divalent metal cation</name>
        <dbReference type="ChEBI" id="CHEBI:60240"/>
    </ligand>
</feature>
<feature type="binding site" evidence="1">
    <location>
        <position position="168"/>
    </location>
    <ligand>
        <name>a divalent metal cation</name>
        <dbReference type="ChEBI" id="CHEBI:60240"/>
    </ligand>
</feature>
<proteinExistence type="inferred from homology"/>
<name>RNH2_STRP4</name>
<protein>
    <recommendedName>
        <fullName evidence="1">Ribonuclease HII</fullName>
        <shortName evidence="1">RNase HII</shortName>
        <ecNumber evidence="1">3.1.26.4</ecNumber>
    </recommendedName>
</protein>
<keyword id="KW-0963">Cytoplasm</keyword>
<keyword id="KW-0255">Endonuclease</keyword>
<keyword id="KW-0378">Hydrolase</keyword>
<keyword id="KW-0464">Manganese</keyword>
<keyword id="KW-0479">Metal-binding</keyword>
<keyword id="KW-0540">Nuclease</keyword>
<evidence type="ECO:0000255" key="1">
    <source>
        <dbReference type="HAMAP-Rule" id="MF_00052"/>
    </source>
</evidence>
<evidence type="ECO:0000255" key="2">
    <source>
        <dbReference type="PROSITE-ProRule" id="PRU01319"/>
    </source>
</evidence>